<reference key="1">
    <citation type="journal article" date="2003" name="J. Bacteriol.">
        <title>Complete genome sequence of the ammonia-oxidizing bacterium and obligate chemolithoautotroph Nitrosomonas europaea.</title>
        <authorList>
            <person name="Chain P."/>
            <person name="Lamerdin J.E."/>
            <person name="Larimer F.W."/>
            <person name="Regala W."/>
            <person name="Lao V."/>
            <person name="Land M.L."/>
            <person name="Hauser L."/>
            <person name="Hooper A.B."/>
            <person name="Klotz M.G."/>
            <person name="Norton J."/>
            <person name="Sayavedra-Soto L.A."/>
            <person name="Arciero D.M."/>
            <person name="Hommes N.G."/>
            <person name="Whittaker M.M."/>
            <person name="Arp D.J."/>
        </authorList>
    </citation>
    <scope>NUCLEOTIDE SEQUENCE [LARGE SCALE GENOMIC DNA]</scope>
    <source>
        <strain>ATCC 19718 / CIP 103999 / KCTC 2705 / NBRC 14298</strain>
    </source>
</reference>
<organism>
    <name type="scientific">Nitrosomonas europaea (strain ATCC 19718 / CIP 103999 / KCTC 2705 / NBRC 14298)</name>
    <dbReference type="NCBI Taxonomy" id="228410"/>
    <lineage>
        <taxon>Bacteria</taxon>
        <taxon>Pseudomonadati</taxon>
        <taxon>Pseudomonadota</taxon>
        <taxon>Betaproteobacteria</taxon>
        <taxon>Nitrosomonadales</taxon>
        <taxon>Nitrosomonadaceae</taxon>
        <taxon>Nitrosomonas</taxon>
    </lineage>
</organism>
<sequence length="432" mass="46983">MARNVVVIGTQWGDEGKGKIVDWLTDRATGVVRFQGGHNAGHTLVVGGEKTVLHLIPSGILRENVTCYIGNGVVLSPGALLEEVDMLEQAGVDVSGRLRISETCPLILPYHIAVDGARELAKGMEKIGTTGRGIGPAYEDKVARRAIRLQDLFRPERLACKLKEVLDYHNFLLKNYYHAATVDYHQVLDDCQIKAERIRPMVADVPKLLFEASQADNNLLFEGAQGALLDIDHGTYPFVTSSNCIAGAASVGSGVGPQMLNYVLGITKAYTTRVGSGPFPTELSDATGEHLAQRGNEFGSTTGRPRRCGWFDAVAARRSIQINGVSGLCITKLDVLDGLETLRIGVGYKSKQSGEMYDALPFGADDLAAAEPVYEELPGWQERTAGIRNFDQLPQAAQNYLKRMEEVCQTPISMISTGPDRTETIVFHHPFG</sequence>
<gene>
    <name evidence="1" type="primary">purA</name>
    <name type="ordered locus">NE1281</name>
</gene>
<name>PURA_NITEU</name>
<protein>
    <recommendedName>
        <fullName evidence="1">Adenylosuccinate synthetase</fullName>
        <shortName evidence="1">AMPSase</shortName>
        <shortName evidence="1">AdSS</shortName>
        <ecNumber evidence="1">6.3.4.4</ecNumber>
    </recommendedName>
    <alternativeName>
        <fullName evidence="1">IMP--aspartate ligase</fullName>
    </alternativeName>
</protein>
<proteinExistence type="inferred from homology"/>
<feature type="chain" id="PRO_0000095204" description="Adenylosuccinate synthetase">
    <location>
        <begin position="1"/>
        <end position="432"/>
    </location>
</feature>
<feature type="active site" description="Proton acceptor" evidence="1">
    <location>
        <position position="14"/>
    </location>
</feature>
<feature type="active site" description="Proton donor" evidence="1">
    <location>
        <position position="42"/>
    </location>
</feature>
<feature type="binding site" evidence="1">
    <location>
        <begin position="13"/>
        <end position="19"/>
    </location>
    <ligand>
        <name>GTP</name>
        <dbReference type="ChEBI" id="CHEBI:37565"/>
    </ligand>
</feature>
<feature type="binding site" description="in other chain" evidence="1">
    <location>
        <begin position="14"/>
        <end position="17"/>
    </location>
    <ligand>
        <name>IMP</name>
        <dbReference type="ChEBI" id="CHEBI:58053"/>
        <note>ligand shared between dimeric partners</note>
    </ligand>
</feature>
<feature type="binding site" evidence="1">
    <location>
        <position position="14"/>
    </location>
    <ligand>
        <name>Mg(2+)</name>
        <dbReference type="ChEBI" id="CHEBI:18420"/>
    </ligand>
</feature>
<feature type="binding site" description="in other chain" evidence="1">
    <location>
        <begin position="39"/>
        <end position="42"/>
    </location>
    <ligand>
        <name>IMP</name>
        <dbReference type="ChEBI" id="CHEBI:58053"/>
        <note>ligand shared between dimeric partners</note>
    </ligand>
</feature>
<feature type="binding site" evidence="1">
    <location>
        <begin position="41"/>
        <end position="43"/>
    </location>
    <ligand>
        <name>GTP</name>
        <dbReference type="ChEBI" id="CHEBI:37565"/>
    </ligand>
</feature>
<feature type="binding site" evidence="1">
    <location>
        <position position="41"/>
    </location>
    <ligand>
        <name>Mg(2+)</name>
        <dbReference type="ChEBI" id="CHEBI:18420"/>
    </ligand>
</feature>
<feature type="binding site" description="in other chain" evidence="1">
    <location>
        <position position="130"/>
    </location>
    <ligand>
        <name>IMP</name>
        <dbReference type="ChEBI" id="CHEBI:58053"/>
        <note>ligand shared between dimeric partners</note>
    </ligand>
</feature>
<feature type="binding site" evidence="1">
    <location>
        <position position="144"/>
    </location>
    <ligand>
        <name>IMP</name>
        <dbReference type="ChEBI" id="CHEBI:58053"/>
        <note>ligand shared between dimeric partners</note>
    </ligand>
</feature>
<feature type="binding site" description="in other chain" evidence="1">
    <location>
        <position position="225"/>
    </location>
    <ligand>
        <name>IMP</name>
        <dbReference type="ChEBI" id="CHEBI:58053"/>
        <note>ligand shared between dimeric partners</note>
    </ligand>
</feature>
<feature type="binding site" description="in other chain" evidence="1">
    <location>
        <position position="240"/>
    </location>
    <ligand>
        <name>IMP</name>
        <dbReference type="ChEBI" id="CHEBI:58053"/>
        <note>ligand shared between dimeric partners</note>
    </ligand>
</feature>
<feature type="binding site" evidence="1">
    <location>
        <begin position="300"/>
        <end position="306"/>
    </location>
    <ligand>
        <name>substrate</name>
    </ligand>
</feature>
<feature type="binding site" description="in other chain" evidence="1">
    <location>
        <position position="304"/>
    </location>
    <ligand>
        <name>IMP</name>
        <dbReference type="ChEBI" id="CHEBI:58053"/>
        <note>ligand shared between dimeric partners</note>
    </ligand>
</feature>
<feature type="binding site" evidence="1">
    <location>
        <position position="306"/>
    </location>
    <ligand>
        <name>GTP</name>
        <dbReference type="ChEBI" id="CHEBI:37565"/>
    </ligand>
</feature>
<feature type="binding site" evidence="1">
    <location>
        <begin position="332"/>
        <end position="334"/>
    </location>
    <ligand>
        <name>GTP</name>
        <dbReference type="ChEBI" id="CHEBI:37565"/>
    </ligand>
</feature>
<feature type="binding site" evidence="1">
    <location>
        <begin position="416"/>
        <end position="418"/>
    </location>
    <ligand>
        <name>GTP</name>
        <dbReference type="ChEBI" id="CHEBI:37565"/>
    </ligand>
</feature>
<accession>Q82V29</accession>
<evidence type="ECO:0000255" key="1">
    <source>
        <dbReference type="HAMAP-Rule" id="MF_00011"/>
    </source>
</evidence>
<comment type="function">
    <text evidence="1">Plays an important role in the de novo pathway of purine nucleotide biosynthesis. Catalyzes the first committed step in the biosynthesis of AMP from IMP.</text>
</comment>
<comment type="catalytic activity">
    <reaction evidence="1">
        <text>IMP + L-aspartate + GTP = N(6)-(1,2-dicarboxyethyl)-AMP + GDP + phosphate + 2 H(+)</text>
        <dbReference type="Rhea" id="RHEA:15753"/>
        <dbReference type="ChEBI" id="CHEBI:15378"/>
        <dbReference type="ChEBI" id="CHEBI:29991"/>
        <dbReference type="ChEBI" id="CHEBI:37565"/>
        <dbReference type="ChEBI" id="CHEBI:43474"/>
        <dbReference type="ChEBI" id="CHEBI:57567"/>
        <dbReference type="ChEBI" id="CHEBI:58053"/>
        <dbReference type="ChEBI" id="CHEBI:58189"/>
        <dbReference type="EC" id="6.3.4.4"/>
    </reaction>
</comment>
<comment type="cofactor">
    <cofactor evidence="1">
        <name>Mg(2+)</name>
        <dbReference type="ChEBI" id="CHEBI:18420"/>
    </cofactor>
    <text evidence="1">Binds 1 Mg(2+) ion per subunit.</text>
</comment>
<comment type="pathway">
    <text evidence="1">Purine metabolism; AMP biosynthesis via de novo pathway; AMP from IMP: step 1/2.</text>
</comment>
<comment type="subunit">
    <text evidence="1">Homodimer.</text>
</comment>
<comment type="subcellular location">
    <subcellularLocation>
        <location evidence="1">Cytoplasm</location>
    </subcellularLocation>
</comment>
<comment type="similarity">
    <text evidence="1">Belongs to the adenylosuccinate synthetase family.</text>
</comment>
<dbReference type="EC" id="6.3.4.4" evidence="1"/>
<dbReference type="EMBL" id="AL954747">
    <property type="protein sequence ID" value="CAD85192.1"/>
    <property type="molecule type" value="Genomic_DNA"/>
</dbReference>
<dbReference type="RefSeq" id="WP_011111859.1">
    <property type="nucleotide sequence ID" value="NC_004757.1"/>
</dbReference>
<dbReference type="SMR" id="Q82V29"/>
<dbReference type="STRING" id="228410.NE1281"/>
<dbReference type="GeneID" id="87104456"/>
<dbReference type="KEGG" id="neu:NE1281"/>
<dbReference type="eggNOG" id="COG0104">
    <property type="taxonomic scope" value="Bacteria"/>
</dbReference>
<dbReference type="HOGENOM" id="CLU_029848_0_0_4"/>
<dbReference type="OrthoDB" id="9807553at2"/>
<dbReference type="PhylomeDB" id="Q82V29"/>
<dbReference type="UniPathway" id="UPA00075">
    <property type="reaction ID" value="UER00335"/>
</dbReference>
<dbReference type="Proteomes" id="UP000001416">
    <property type="component" value="Chromosome"/>
</dbReference>
<dbReference type="GO" id="GO:0005737">
    <property type="term" value="C:cytoplasm"/>
    <property type="evidence" value="ECO:0007669"/>
    <property type="project" value="UniProtKB-SubCell"/>
</dbReference>
<dbReference type="GO" id="GO:0004019">
    <property type="term" value="F:adenylosuccinate synthase activity"/>
    <property type="evidence" value="ECO:0007669"/>
    <property type="project" value="UniProtKB-UniRule"/>
</dbReference>
<dbReference type="GO" id="GO:0005525">
    <property type="term" value="F:GTP binding"/>
    <property type="evidence" value="ECO:0007669"/>
    <property type="project" value="UniProtKB-UniRule"/>
</dbReference>
<dbReference type="GO" id="GO:0000287">
    <property type="term" value="F:magnesium ion binding"/>
    <property type="evidence" value="ECO:0007669"/>
    <property type="project" value="UniProtKB-UniRule"/>
</dbReference>
<dbReference type="GO" id="GO:0044208">
    <property type="term" value="P:'de novo' AMP biosynthetic process"/>
    <property type="evidence" value="ECO:0007669"/>
    <property type="project" value="UniProtKB-UniRule"/>
</dbReference>
<dbReference type="GO" id="GO:0046040">
    <property type="term" value="P:IMP metabolic process"/>
    <property type="evidence" value="ECO:0007669"/>
    <property type="project" value="TreeGrafter"/>
</dbReference>
<dbReference type="CDD" id="cd03108">
    <property type="entry name" value="AdSS"/>
    <property type="match status" value="1"/>
</dbReference>
<dbReference type="FunFam" id="1.10.300.10:FF:000001">
    <property type="entry name" value="Adenylosuccinate synthetase"/>
    <property type="match status" value="1"/>
</dbReference>
<dbReference type="FunFam" id="3.90.170.10:FF:000001">
    <property type="entry name" value="Adenylosuccinate synthetase"/>
    <property type="match status" value="1"/>
</dbReference>
<dbReference type="Gene3D" id="3.40.440.10">
    <property type="entry name" value="Adenylosuccinate Synthetase, subunit A, domain 1"/>
    <property type="match status" value="1"/>
</dbReference>
<dbReference type="Gene3D" id="1.10.300.10">
    <property type="entry name" value="Adenylosuccinate Synthetase, subunit A, domain 2"/>
    <property type="match status" value="1"/>
</dbReference>
<dbReference type="Gene3D" id="3.90.170.10">
    <property type="entry name" value="Adenylosuccinate Synthetase, subunit A, domain 3"/>
    <property type="match status" value="1"/>
</dbReference>
<dbReference type="HAMAP" id="MF_00011">
    <property type="entry name" value="Adenylosucc_synth"/>
    <property type="match status" value="1"/>
</dbReference>
<dbReference type="InterPro" id="IPR018220">
    <property type="entry name" value="Adenylosuccin_syn_GTP-bd"/>
</dbReference>
<dbReference type="InterPro" id="IPR033128">
    <property type="entry name" value="Adenylosuccin_syn_Lys_AS"/>
</dbReference>
<dbReference type="InterPro" id="IPR042109">
    <property type="entry name" value="Adenylosuccinate_synth_dom1"/>
</dbReference>
<dbReference type="InterPro" id="IPR042110">
    <property type="entry name" value="Adenylosuccinate_synth_dom2"/>
</dbReference>
<dbReference type="InterPro" id="IPR042111">
    <property type="entry name" value="Adenylosuccinate_synth_dom3"/>
</dbReference>
<dbReference type="InterPro" id="IPR001114">
    <property type="entry name" value="Adenylosuccinate_synthetase"/>
</dbReference>
<dbReference type="InterPro" id="IPR027417">
    <property type="entry name" value="P-loop_NTPase"/>
</dbReference>
<dbReference type="NCBIfam" id="NF002223">
    <property type="entry name" value="PRK01117.1"/>
    <property type="match status" value="1"/>
</dbReference>
<dbReference type="NCBIfam" id="TIGR00184">
    <property type="entry name" value="purA"/>
    <property type="match status" value="1"/>
</dbReference>
<dbReference type="PANTHER" id="PTHR11846">
    <property type="entry name" value="ADENYLOSUCCINATE SYNTHETASE"/>
    <property type="match status" value="1"/>
</dbReference>
<dbReference type="PANTHER" id="PTHR11846:SF0">
    <property type="entry name" value="ADENYLOSUCCINATE SYNTHETASE"/>
    <property type="match status" value="1"/>
</dbReference>
<dbReference type="Pfam" id="PF00709">
    <property type="entry name" value="Adenylsucc_synt"/>
    <property type="match status" value="1"/>
</dbReference>
<dbReference type="SMART" id="SM00788">
    <property type="entry name" value="Adenylsucc_synt"/>
    <property type="match status" value="1"/>
</dbReference>
<dbReference type="SUPFAM" id="SSF52540">
    <property type="entry name" value="P-loop containing nucleoside triphosphate hydrolases"/>
    <property type="match status" value="1"/>
</dbReference>
<dbReference type="PROSITE" id="PS01266">
    <property type="entry name" value="ADENYLOSUCCIN_SYN_1"/>
    <property type="match status" value="1"/>
</dbReference>
<dbReference type="PROSITE" id="PS00513">
    <property type="entry name" value="ADENYLOSUCCIN_SYN_2"/>
    <property type="match status" value="1"/>
</dbReference>
<keyword id="KW-0963">Cytoplasm</keyword>
<keyword id="KW-0342">GTP-binding</keyword>
<keyword id="KW-0436">Ligase</keyword>
<keyword id="KW-0460">Magnesium</keyword>
<keyword id="KW-0479">Metal-binding</keyword>
<keyword id="KW-0547">Nucleotide-binding</keyword>
<keyword id="KW-0658">Purine biosynthesis</keyword>
<keyword id="KW-1185">Reference proteome</keyword>